<reference key="1">
    <citation type="journal article" date="2005" name="Nucleic Acids Res.">
        <title>The genome sequence of Salmonella enterica serovar Choleraesuis, a highly invasive and resistant zoonotic pathogen.</title>
        <authorList>
            <person name="Chiu C.-H."/>
            <person name="Tang P."/>
            <person name="Chu C."/>
            <person name="Hu S."/>
            <person name="Bao Q."/>
            <person name="Yu J."/>
            <person name="Chou Y.-Y."/>
            <person name="Wang H.-S."/>
            <person name="Lee Y.-S."/>
        </authorList>
    </citation>
    <scope>NUCLEOTIDE SEQUENCE [LARGE SCALE GENOMIC DNA]</scope>
    <source>
        <strain>SC-B67</strain>
    </source>
</reference>
<feature type="chain" id="PRO_0000160291" description="Protein PsiE">
    <location>
        <begin position="1"/>
        <end position="136"/>
    </location>
</feature>
<feature type="topological domain" description="Cytoplasmic" evidence="2">
    <location>
        <begin position="1"/>
        <end position="14"/>
    </location>
</feature>
<feature type="transmembrane region" description="Helical" evidence="2">
    <location>
        <begin position="15"/>
        <end position="35"/>
    </location>
</feature>
<feature type="topological domain" description="Periplasmic" evidence="2">
    <location>
        <begin position="36"/>
        <end position="54"/>
    </location>
</feature>
<feature type="transmembrane region" description="Helical" evidence="2">
    <location>
        <begin position="55"/>
        <end position="75"/>
    </location>
</feature>
<feature type="topological domain" description="Cytoplasmic" evidence="2">
    <location>
        <begin position="76"/>
        <end position="82"/>
    </location>
</feature>
<feature type="transmembrane region" description="Helical" evidence="2">
    <location>
        <begin position="83"/>
        <end position="103"/>
    </location>
</feature>
<feature type="topological domain" description="Periplasmic" evidence="2">
    <location>
        <begin position="104"/>
        <end position="107"/>
    </location>
</feature>
<feature type="transmembrane region" description="Helical" evidence="2">
    <location>
        <begin position="108"/>
        <end position="128"/>
    </location>
</feature>
<feature type="topological domain" description="Cytoplasmic" evidence="2">
    <location>
        <begin position="129"/>
        <end position="136"/>
    </location>
</feature>
<gene>
    <name type="primary">psiE</name>
    <name type="ordered locus">SCH_4105</name>
</gene>
<keyword id="KW-0997">Cell inner membrane</keyword>
<keyword id="KW-1003">Cell membrane</keyword>
<keyword id="KW-0472">Membrane</keyword>
<keyword id="KW-0812">Transmembrane</keyword>
<keyword id="KW-1133">Transmembrane helix</keyword>
<name>PSIE_SALCH</name>
<dbReference type="EMBL" id="AE017220">
    <property type="protein sequence ID" value="AAX68011.1"/>
    <property type="molecule type" value="Genomic_DNA"/>
</dbReference>
<dbReference type="RefSeq" id="WP_000982749.1">
    <property type="nucleotide sequence ID" value="NC_006905.1"/>
</dbReference>
<dbReference type="SMR" id="Q57H01"/>
<dbReference type="KEGG" id="sec:SCH_4105"/>
<dbReference type="HOGENOM" id="CLU_127561_0_1_6"/>
<dbReference type="Proteomes" id="UP000000538">
    <property type="component" value="Chromosome"/>
</dbReference>
<dbReference type="GO" id="GO:0005886">
    <property type="term" value="C:plasma membrane"/>
    <property type="evidence" value="ECO:0007669"/>
    <property type="project" value="UniProtKB-SubCell"/>
</dbReference>
<dbReference type="GO" id="GO:0016036">
    <property type="term" value="P:cellular response to phosphate starvation"/>
    <property type="evidence" value="ECO:0007669"/>
    <property type="project" value="InterPro"/>
</dbReference>
<dbReference type="HAMAP" id="MF_01048">
    <property type="entry name" value="PsiE"/>
    <property type="match status" value="1"/>
</dbReference>
<dbReference type="InterPro" id="IPR009315">
    <property type="entry name" value="P_starv_induced_PsiE"/>
</dbReference>
<dbReference type="InterPro" id="IPR020948">
    <property type="entry name" value="P_starv_induced_PsiE-like"/>
</dbReference>
<dbReference type="NCBIfam" id="NF002764">
    <property type="entry name" value="PRK02833.1-2"/>
    <property type="match status" value="1"/>
</dbReference>
<dbReference type="NCBIfam" id="NF002765">
    <property type="entry name" value="PRK02833.1-3"/>
    <property type="match status" value="1"/>
</dbReference>
<dbReference type="NCBIfam" id="NF002767">
    <property type="entry name" value="PRK02833.1-5"/>
    <property type="match status" value="1"/>
</dbReference>
<dbReference type="PANTHER" id="PTHR37819">
    <property type="entry name" value="PROTEIN PSIE"/>
    <property type="match status" value="1"/>
</dbReference>
<dbReference type="PANTHER" id="PTHR37819:SF1">
    <property type="entry name" value="PROTEIN PSIE"/>
    <property type="match status" value="1"/>
</dbReference>
<dbReference type="Pfam" id="PF06146">
    <property type="entry name" value="PsiE"/>
    <property type="match status" value="1"/>
</dbReference>
<dbReference type="PIRSF" id="PIRSF029598">
    <property type="entry name" value="PsiE"/>
    <property type="match status" value="1"/>
</dbReference>
<accession>Q57H01</accession>
<evidence type="ECO:0000250" key="1"/>
<evidence type="ECO:0000255" key="2"/>
<evidence type="ECO:0000305" key="3"/>
<protein>
    <recommendedName>
        <fullName>Protein PsiE</fullName>
    </recommendedName>
</protein>
<comment type="subcellular location">
    <subcellularLocation>
        <location evidence="1">Cell inner membrane</location>
        <topology evidence="1">Multi-pass membrane protein</topology>
    </subcellularLocation>
</comment>
<comment type="similarity">
    <text evidence="3">Belongs to the PsiE family.</text>
</comment>
<organism>
    <name type="scientific">Salmonella choleraesuis (strain SC-B67)</name>
    <dbReference type="NCBI Taxonomy" id="321314"/>
    <lineage>
        <taxon>Bacteria</taxon>
        <taxon>Pseudomonadati</taxon>
        <taxon>Pseudomonadota</taxon>
        <taxon>Gammaproteobacteria</taxon>
        <taxon>Enterobacterales</taxon>
        <taxon>Enterobacteriaceae</taxon>
        <taxon>Salmonella</taxon>
    </lineage>
</organism>
<sequence length="136" mass="15604">MMPLSRSRLEFIATILQNVLNLGLLTLGLILVVFLGKETVHLADALFAPEQASKYELVEGLVIYFLYFEFIALIVKYFKSGLHFPLRYFVYIGITAIVRLIIVDHKTPMDVLLYSAAILLLVITLWLCNSNRLRRE</sequence>
<proteinExistence type="inferred from homology"/>